<organism>
    <name type="scientific">Caulobacter sp. (strain K31)</name>
    <dbReference type="NCBI Taxonomy" id="366602"/>
    <lineage>
        <taxon>Bacteria</taxon>
        <taxon>Pseudomonadati</taxon>
        <taxon>Pseudomonadota</taxon>
        <taxon>Alphaproteobacteria</taxon>
        <taxon>Caulobacterales</taxon>
        <taxon>Caulobacteraceae</taxon>
        <taxon>Caulobacter</taxon>
    </lineage>
</organism>
<sequence length="552" mass="61290">MFQGLSPLARDARAWPFEQARVLLARILRLRLSDAERDLASVLIHSGKADEAVRTFPALAKPVILETGYGPSGLPHLGTFGEVARTTMVRNAFRALTDDAIKTRLIAFSDDMDGLRKVPDNIENKQPLIEDLGKPLTVVRDPFGTHDSFGAHNNARLRAFLDGFGFEYEFVSSTDCYKGGLFDETLLTALARFDAIQKVMLPTLGEERRASYSPFLPISPSTGKVLQVPTLERDVDKGTIVFQDEDGSKVEVPVTGGHVKMQWKPDWAMRWTALGVDYEMSGKDLIDSVKASGQICKALGGVPPEGFNYELFLDENSQKISKSKGNGLSMEDWLRYGAPESLSYYMFQSPKSAKKLYFDVIPKATDEYLQQLDAYPKQEPAKQLDNPVWHVHSGRPPQYGSPVSFSLMLNLVSAANASDKEILWGFLSRYIPGATPQSQPLLDRLAGYAINYYEDFVKPSKVFRAPDDKERAAMLDLLGRLKALPSDCQDAELIQNEVFAVGKDHGFDPLRAWFQALYEVLLGQSQGPRFGSFAAIFGLDRTTALIAEKLAV</sequence>
<name>SYK_CAUSK</name>
<keyword id="KW-0030">Aminoacyl-tRNA synthetase</keyword>
<keyword id="KW-0067">ATP-binding</keyword>
<keyword id="KW-0963">Cytoplasm</keyword>
<keyword id="KW-0436">Ligase</keyword>
<keyword id="KW-0547">Nucleotide-binding</keyword>
<keyword id="KW-0648">Protein biosynthesis</keyword>
<accession>B0T2A6</accession>
<gene>
    <name evidence="1" type="primary">lysS</name>
    <name type="ordered locus">Caul_0137</name>
</gene>
<dbReference type="EC" id="6.1.1.6" evidence="1"/>
<dbReference type="EMBL" id="CP000927">
    <property type="protein sequence ID" value="ABZ69275.1"/>
    <property type="molecule type" value="Genomic_DNA"/>
</dbReference>
<dbReference type="SMR" id="B0T2A6"/>
<dbReference type="STRING" id="366602.Caul_0137"/>
<dbReference type="KEGG" id="cak:Caul_0137"/>
<dbReference type="eggNOG" id="COG1384">
    <property type="taxonomic scope" value="Bacteria"/>
</dbReference>
<dbReference type="HOGENOM" id="CLU_025562_2_0_5"/>
<dbReference type="OrthoDB" id="9803151at2"/>
<dbReference type="GO" id="GO:0005737">
    <property type="term" value="C:cytoplasm"/>
    <property type="evidence" value="ECO:0007669"/>
    <property type="project" value="UniProtKB-SubCell"/>
</dbReference>
<dbReference type="GO" id="GO:0005524">
    <property type="term" value="F:ATP binding"/>
    <property type="evidence" value="ECO:0007669"/>
    <property type="project" value="UniProtKB-UniRule"/>
</dbReference>
<dbReference type="GO" id="GO:0004824">
    <property type="term" value="F:lysine-tRNA ligase activity"/>
    <property type="evidence" value="ECO:0007669"/>
    <property type="project" value="UniProtKB-UniRule"/>
</dbReference>
<dbReference type="GO" id="GO:0000049">
    <property type="term" value="F:tRNA binding"/>
    <property type="evidence" value="ECO:0007669"/>
    <property type="project" value="InterPro"/>
</dbReference>
<dbReference type="GO" id="GO:0006430">
    <property type="term" value="P:lysyl-tRNA aminoacylation"/>
    <property type="evidence" value="ECO:0007669"/>
    <property type="project" value="UniProtKB-UniRule"/>
</dbReference>
<dbReference type="Gene3D" id="1.10.10.350">
    <property type="match status" value="1"/>
</dbReference>
<dbReference type="Gene3D" id="3.40.50.620">
    <property type="entry name" value="HUPs"/>
    <property type="match status" value="1"/>
</dbReference>
<dbReference type="HAMAP" id="MF_00177">
    <property type="entry name" value="Lys_tRNA_synth_class1"/>
    <property type="match status" value="1"/>
</dbReference>
<dbReference type="InterPro" id="IPR020751">
    <property type="entry name" value="aa-tRNA-synth_I_codon-bd_sub2"/>
</dbReference>
<dbReference type="InterPro" id="IPR001412">
    <property type="entry name" value="aa-tRNA-synth_I_CS"/>
</dbReference>
<dbReference type="InterPro" id="IPR008925">
    <property type="entry name" value="aa_tRNA-synth_I_cd-bd_sf"/>
</dbReference>
<dbReference type="InterPro" id="IPR002904">
    <property type="entry name" value="Lys-tRNA-ligase"/>
</dbReference>
<dbReference type="InterPro" id="IPR014729">
    <property type="entry name" value="Rossmann-like_a/b/a_fold"/>
</dbReference>
<dbReference type="NCBIfam" id="TIGR00467">
    <property type="entry name" value="lysS_arch"/>
    <property type="match status" value="1"/>
</dbReference>
<dbReference type="NCBIfam" id="NF001968">
    <property type="entry name" value="PRK00750.1-2"/>
    <property type="match status" value="1"/>
</dbReference>
<dbReference type="PANTHER" id="PTHR37940">
    <property type="entry name" value="LYSINE--TRNA LIGASE"/>
    <property type="match status" value="1"/>
</dbReference>
<dbReference type="PANTHER" id="PTHR37940:SF1">
    <property type="entry name" value="LYSINE--TRNA LIGASE"/>
    <property type="match status" value="1"/>
</dbReference>
<dbReference type="Pfam" id="PF01921">
    <property type="entry name" value="tRNA-synt_1f"/>
    <property type="match status" value="1"/>
</dbReference>
<dbReference type="SUPFAM" id="SSF48163">
    <property type="entry name" value="An anticodon-binding domain of class I aminoacyl-tRNA synthetases"/>
    <property type="match status" value="1"/>
</dbReference>
<dbReference type="SUPFAM" id="SSF52374">
    <property type="entry name" value="Nucleotidylyl transferase"/>
    <property type="match status" value="1"/>
</dbReference>
<dbReference type="PROSITE" id="PS00178">
    <property type="entry name" value="AA_TRNA_LIGASE_I"/>
    <property type="match status" value="1"/>
</dbReference>
<protein>
    <recommendedName>
        <fullName evidence="1">Lysine--tRNA ligase</fullName>
        <ecNumber evidence="1">6.1.1.6</ecNumber>
    </recommendedName>
    <alternativeName>
        <fullName evidence="1">Lysyl-tRNA synthetase</fullName>
        <shortName evidence="1">LysRS</shortName>
    </alternativeName>
</protein>
<comment type="catalytic activity">
    <reaction evidence="1">
        <text>tRNA(Lys) + L-lysine + ATP = L-lysyl-tRNA(Lys) + AMP + diphosphate</text>
        <dbReference type="Rhea" id="RHEA:20792"/>
        <dbReference type="Rhea" id="RHEA-COMP:9696"/>
        <dbReference type="Rhea" id="RHEA-COMP:9697"/>
        <dbReference type="ChEBI" id="CHEBI:30616"/>
        <dbReference type="ChEBI" id="CHEBI:32551"/>
        <dbReference type="ChEBI" id="CHEBI:33019"/>
        <dbReference type="ChEBI" id="CHEBI:78442"/>
        <dbReference type="ChEBI" id="CHEBI:78529"/>
        <dbReference type="ChEBI" id="CHEBI:456215"/>
        <dbReference type="EC" id="6.1.1.6"/>
    </reaction>
</comment>
<comment type="subcellular location">
    <subcellularLocation>
        <location evidence="1">Cytoplasm</location>
    </subcellularLocation>
</comment>
<comment type="similarity">
    <text evidence="1">Belongs to the class-I aminoacyl-tRNA synthetase family.</text>
</comment>
<proteinExistence type="inferred from homology"/>
<reference key="1">
    <citation type="submission" date="2008-01" db="EMBL/GenBank/DDBJ databases">
        <title>Complete sequence of chromosome of Caulobacter sp. K31.</title>
        <authorList>
            <consortium name="US DOE Joint Genome Institute"/>
            <person name="Copeland A."/>
            <person name="Lucas S."/>
            <person name="Lapidus A."/>
            <person name="Barry K."/>
            <person name="Glavina del Rio T."/>
            <person name="Dalin E."/>
            <person name="Tice H."/>
            <person name="Pitluck S."/>
            <person name="Bruce D."/>
            <person name="Goodwin L."/>
            <person name="Thompson L.S."/>
            <person name="Brettin T."/>
            <person name="Detter J.C."/>
            <person name="Han C."/>
            <person name="Schmutz J."/>
            <person name="Larimer F."/>
            <person name="Land M."/>
            <person name="Hauser L."/>
            <person name="Kyrpides N."/>
            <person name="Kim E."/>
            <person name="Stephens C."/>
            <person name="Richardson P."/>
        </authorList>
    </citation>
    <scope>NUCLEOTIDE SEQUENCE [LARGE SCALE GENOMIC DNA]</scope>
    <source>
        <strain>K31</strain>
    </source>
</reference>
<feature type="chain" id="PRO_1000199266" description="Lysine--tRNA ligase">
    <location>
        <begin position="1"/>
        <end position="552"/>
    </location>
</feature>
<feature type="short sequence motif" description="'HIGH' region">
    <location>
        <begin position="71"/>
        <end position="79"/>
    </location>
</feature>
<feature type="short sequence motif" description="'KMSKS' region">
    <location>
        <begin position="319"/>
        <end position="323"/>
    </location>
</feature>
<feature type="binding site" evidence="1">
    <location>
        <position position="322"/>
    </location>
    <ligand>
        <name>ATP</name>
        <dbReference type="ChEBI" id="CHEBI:30616"/>
    </ligand>
</feature>
<evidence type="ECO:0000255" key="1">
    <source>
        <dbReference type="HAMAP-Rule" id="MF_00177"/>
    </source>
</evidence>